<protein>
    <recommendedName>
        <fullName evidence="1">Small ribosomal subunit protein uS3</fullName>
    </recommendedName>
    <alternativeName>
        <fullName evidence="2">30S ribosomal protein S3</fullName>
    </alternativeName>
</protein>
<accession>Q31VW2</accession>
<sequence>MGQKVHPNGIRLGIVKPWNSTWFANTKEFADNLDSDFKVRQYLTKELAKASVSRIVIERPAKSIRVTIHTARPGIVIGKKGEDVEKLRKVVADIAGVPAQINIAEVRKPELDAKLVADSITSQLERRVMFRRAMKRAVQNAMRLGAKGIKVEVSGRLGGAEIARTEWYREGRVPLHTLRADIDYNTSEAHTTYGVIGVKVWIFKGEILGGMAAVEQPEKPAAQPKKQQRKGRK</sequence>
<reference key="1">
    <citation type="journal article" date="2005" name="Nucleic Acids Res.">
        <title>Genome dynamics and diversity of Shigella species, the etiologic agents of bacillary dysentery.</title>
        <authorList>
            <person name="Yang F."/>
            <person name="Yang J."/>
            <person name="Zhang X."/>
            <person name="Chen L."/>
            <person name="Jiang Y."/>
            <person name="Yan Y."/>
            <person name="Tang X."/>
            <person name="Wang J."/>
            <person name="Xiong Z."/>
            <person name="Dong J."/>
            <person name="Xue Y."/>
            <person name="Zhu Y."/>
            <person name="Xu X."/>
            <person name="Sun L."/>
            <person name="Chen S."/>
            <person name="Nie H."/>
            <person name="Peng J."/>
            <person name="Xu J."/>
            <person name="Wang Y."/>
            <person name="Yuan Z."/>
            <person name="Wen Y."/>
            <person name="Yao Z."/>
            <person name="Shen Y."/>
            <person name="Qiang B."/>
            <person name="Hou Y."/>
            <person name="Yu J."/>
            <person name="Jin Q."/>
        </authorList>
    </citation>
    <scope>NUCLEOTIDE SEQUENCE [LARGE SCALE GENOMIC DNA]</scope>
    <source>
        <strain>Sb227</strain>
    </source>
</reference>
<keyword id="KW-0687">Ribonucleoprotein</keyword>
<keyword id="KW-0689">Ribosomal protein</keyword>
<keyword id="KW-0694">RNA-binding</keyword>
<keyword id="KW-0699">rRNA-binding</keyword>
<feature type="chain" id="PRO_0000230726" description="Small ribosomal subunit protein uS3">
    <location>
        <begin position="1"/>
        <end position="233"/>
    </location>
</feature>
<feature type="domain" description="KH type-2" evidence="1">
    <location>
        <begin position="39"/>
        <end position="107"/>
    </location>
</feature>
<organism>
    <name type="scientific">Shigella boydii serotype 4 (strain Sb227)</name>
    <dbReference type="NCBI Taxonomy" id="300268"/>
    <lineage>
        <taxon>Bacteria</taxon>
        <taxon>Pseudomonadati</taxon>
        <taxon>Pseudomonadota</taxon>
        <taxon>Gammaproteobacteria</taxon>
        <taxon>Enterobacterales</taxon>
        <taxon>Enterobacteriaceae</taxon>
        <taxon>Shigella</taxon>
    </lineage>
</organism>
<name>RS3_SHIBS</name>
<dbReference type="EMBL" id="CP000036">
    <property type="protein sequence ID" value="ABB67796.1"/>
    <property type="molecule type" value="Genomic_DNA"/>
</dbReference>
<dbReference type="RefSeq" id="WP_000529945.1">
    <property type="nucleotide sequence ID" value="NC_007613.1"/>
</dbReference>
<dbReference type="SMR" id="Q31VW2"/>
<dbReference type="GeneID" id="97603663"/>
<dbReference type="KEGG" id="sbo:SBO_3308"/>
<dbReference type="HOGENOM" id="CLU_058591_0_2_6"/>
<dbReference type="Proteomes" id="UP000007067">
    <property type="component" value="Chromosome"/>
</dbReference>
<dbReference type="GO" id="GO:0022627">
    <property type="term" value="C:cytosolic small ribosomal subunit"/>
    <property type="evidence" value="ECO:0007669"/>
    <property type="project" value="TreeGrafter"/>
</dbReference>
<dbReference type="GO" id="GO:0003729">
    <property type="term" value="F:mRNA binding"/>
    <property type="evidence" value="ECO:0007669"/>
    <property type="project" value="UniProtKB-UniRule"/>
</dbReference>
<dbReference type="GO" id="GO:0019843">
    <property type="term" value="F:rRNA binding"/>
    <property type="evidence" value="ECO:0007669"/>
    <property type="project" value="UniProtKB-UniRule"/>
</dbReference>
<dbReference type="GO" id="GO:0003735">
    <property type="term" value="F:structural constituent of ribosome"/>
    <property type="evidence" value="ECO:0007669"/>
    <property type="project" value="InterPro"/>
</dbReference>
<dbReference type="GO" id="GO:0006412">
    <property type="term" value="P:translation"/>
    <property type="evidence" value="ECO:0007669"/>
    <property type="project" value="UniProtKB-UniRule"/>
</dbReference>
<dbReference type="CDD" id="cd02412">
    <property type="entry name" value="KH-II_30S_S3"/>
    <property type="match status" value="1"/>
</dbReference>
<dbReference type="FunFam" id="3.30.1140.32:FF:000001">
    <property type="entry name" value="30S ribosomal protein S3"/>
    <property type="match status" value="1"/>
</dbReference>
<dbReference type="FunFam" id="3.30.300.20:FF:000001">
    <property type="entry name" value="30S ribosomal protein S3"/>
    <property type="match status" value="1"/>
</dbReference>
<dbReference type="Gene3D" id="3.30.300.20">
    <property type="match status" value="1"/>
</dbReference>
<dbReference type="Gene3D" id="3.30.1140.32">
    <property type="entry name" value="Ribosomal protein S3, C-terminal domain"/>
    <property type="match status" value="1"/>
</dbReference>
<dbReference type="HAMAP" id="MF_01309_B">
    <property type="entry name" value="Ribosomal_uS3_B"/>
    <property type="match status" value="1"/>
</dbReference>
<dbReference type="InterPro" id="IPR004087">
    <property type="entry name" value="KH_dom"/>
</dbReference>
<dbReference type="InterPro" id="IPR015946">
    <property type="entry name" value="KH_dom-like_a/b"/>
</dbReference>
<dbReference type="InterPro" id="IPR004044">
    <property type="entry name" value="KH_dom_type_2"/>
</dbReference>
<dbReference type="InterPro" id="IPR009019">
    <property type="entry name" value="KH_sf_prok-type"/>
</dbReference>
<dbReference type="InterPro" id="IPR036419">
    <property type="entry name" value="Ribosomal_S3_C_sf"/>
</dbReference>
<dbReference type="InterPro" id="IPR005704">
    <property type="entry name" value="Ribosomal_uS3_bac-typ"/>
</dbReference>
<dbReference type="InterPro" id="IPR001351">
    <property type="entry name" value="Ribosomal_uS3_C"/>
</dbReference>
<dbReference type="InterPro" id="IPR018280">
    <property type="entry name" value="Ribosomal_uS3_CS"/>
</dbReference>
<dbReference type="NCBIfam" id="TIGR01009">
    <property type="entry name" value="rpsC_bact"/>
    <property type="match status" value="1"/>
</dbReference>
<dbReference type="PANTHER" id="PTHR11760">
    <property type="entry name" value="30S/40S RIBOSOMAL PROTEIN S3"/>
    <property type="match status" value="1"/>
</dbReference>
<dbReference type="PANTHER" id="PTHR11760:SF19">
    <property type="entry name" value="SMALL RIBOSOMAL SUBUNIT PROTEIN US3C"/>
    <property type="match status" value="1"/>
</dbReference>
<dbReference type="Pfam" id="PF07650">
    <property type="entry name" value="KH_2"/>
    <property type="match status" value="1"/>
</dbReference>
<dbReference type="Pfam" id="PF00189">
    <property type="entry name" value="Ribosomal_S3_C"/>
    <property type="match status" value="1"/>
</dbReference>
<dbReference type="SMART" id="SM00322">
    <property type="entry name" value="KH"/>
    <property type="match status" value="1"/>
</dbReference>
<dbReference type="SUPFAM" id="SSF54814">
    <property type="entry name" value="Prokaryotic type KH domain (KH-domain type II)"/>
    <property type="match status" value="1"/>
</dbReference>
<dbReference type="SUPFAM" id="SSF54821">
    <property type="entry name" value="Ribosomal protein S3 C-terminal domain"/>
    <property type="match status" value="1"/>
</dbReference>
<dbReference type="PROSITE" id="PS50823">
    <property type="entry name" value="KH_TYPE_2"/>
    <property type="match status" value="1"/>
</dbReference>
<dbReference type="PROSITE" id="PS00548">
    <property type="entry name" value="RIBOSOMAL_S3"/>
    <property type="match status" value="1"/>
</dbReference>
<proteinExistence type="inferred from homology"/>
<evidence type="ECO:0000255" key="1">
    <source>
        <dbReference type="HAMAP-Rule" id="MF_01309"/>
    </source>
</evidence>
<evidence type="ECO:0000305" key="2"/>
<gene>
    <name evidence="1" type="primary">rpsC</name>
    <name type="ordered locus">SBO_3308</name>
</gene>
<comment type="function">
    <text evidence="1">Binds the lower part of the 30S subunit head. Binds mRNA in the 70S ribosome, positioning it for translation.</text>
</comment>
<comment type="subunit">
    <text evidence="1">Part of the 30S ribosomal subunit. Forms a tight complex with proteins S10 and S14.</text>
</comment>
<comment type="similarity">
    <text evidence="1">Belongs to the universal ribosomal protein uS3 family.</text>
</comment>